<proteinExistence type="inferred from homology"/>
<protein>
    <recommendedName>
        <fullName>Guanine nucleotide exchange factor SopE</fullName>
    </recommendedName>
    <alternativeName>
        <fullName>Effector protein SopE</fullName>
    </alternativeName>
    <alternativeName>
        <fullName>Toxin SopE</fullName>
    </alternativeName>
</protein>
<name>SOPE_SALPA</name>
<evidence type="ECO:0000250" key="1"/>
<evidence type="ECO:0000305" key="2"/>
<comment type="function">
    <text evidence="1">Activator for both CDC42 and RAC1 by directly engaging these Rho GTPases and acting as potent guanine nucleotide exchange factor (GEF). This activation results in actin cytoskeleton rearrangements and stimulates membrane ruffling, promoting bacterial entry into non-phagocytic cells (By similarity).</text>
</comment>
<comment type="subcellular location">
    <subcellularLocation>
        <location>Secreted</location>
    </subcellularLocation>
    <text>Secreted via the type III secretion system 1 (SPI-1 T3SS).</text>
</comment>
<comment type="similarity">
    <text evidence="2">Belongs to the GEF (guanine exchange factor) SopE family.</text>
</comment>
<feature type="initiator methionine" description="Removed" evidence="1">
    <location>
        <position position="1"/>
    </location>
</feature>
<feature type="chain" id="PRO_0000220738" description="Guanine nucleotide exchange factor SopE">
    <location>
        <begin position="2"/>
        <end position="240"/>
    </location>
</feature>
<feature type="region of interest" description="GEF catalytic domain" evidence="1">
    <location>
        <begin position="78"/>
        <end position="240"/>
    </location>
</feature>
<gene>
    <name type="primary">sopE</name>
    <name type="ordered locus">SPA2564</name>
</gene>
<accession>Q5PFI5</accession>
<reference key="1">
    <citation type="journal article" date="2004" name="Nat. Genet.">
        <title>Comparison of genome degradation in Paratyphi A and Typhi, human-restricted serovars of Salmonella enterica that cause typhoid.</title>
        <authorList>
            <person name="McClelland M."/>
            <person name="Sanderson K.E."/>
            <person name="Clifton S.W."/>
            <person name="Latreille P."/>
            <person name="Porwollik S."/>
            <person name="Sabo A."/>
            <person name="Meyer R."/>
            <person name="Bieri T."/>
            <person name="Ozersky P."/>
            <person name="McLellan M."/>
            <person name="Harkins C.R."/>
            <person name="Wang C."/>
            <person name="Nguyen C."/>
            <person name="Berghoff A."/>
            <person name="Elliott G."/>
            <person name="Kohlberg S."/>
            <person name="Strong C."/>
            <person name="Du F."/>
            <person name="Carter J."/>
            <person name="Kremizki C."/>
            <person name="Layman D."/>
            <person name="Leonard S."/>
            <person name="Sun H."/>
            <person name="Fulton L."/>
            <person name="Nash W."/>
            <person name="Miner T."/>
            <person name="Minx P."/>
            <person name="Delehaunty K."/>
            <person name="Fronick C."/>
            <person name="Magrini V."/>
            <person name="Nhan M."/>
            <person name="Warren W."/>
            <person name="Florea L."/>
            <person name="Spieth J."/>
            <person name="Wilson R.K."/>
        </authorList>
    </citation>
    <scope>NUCLEOTIDE SEQUENCE [LARGE SCALE GENOMIC DNA]</scope>
    <source>
        <strain>ATCC 9150 / SARB42</strain>
    </source>
</reference>
<organism>
    <name type="scientific">Salmonella paratyphi A (strain ATCC 9150 / SARB42)</name>
    <dbReference type="NCBI Taxonomy" id="295319"/>
    <lineage>
        <taxon>Bacteria</taxon>
        <taxon>Pseudomonadati</taxon>
        <taxon>Pseudomonadota</taxon>
        <taxon>Gammaproteobacteria</taxon>
        <taxon>Enterobacterales</taxon>
        <taxon>Enterobacteriaceae</taxon>
        <taxon>Salmonella</taxon>
    </lineage>
</organism>
<keyword id="KW-0343">GTPase activation</keyword>
<keyword id="KW-0344">Guanine-nucleotide releasing factor</keyword>
<keyword id="KW-0964">Secreted</keyword>
<keyword id="KW-0843">Virulence</keyword>
<dbReference type="EMBL" id="CP000026">
    <property type="protein sequence ID" value="AAV78431.1"/>
    <property type="molecule type" value="Genomic_DNA"/>
</dbReference>
<dbReference type="RefSeq" id="WP_000161709.1">
    <property type="nucleotide sequence ID" value="NC_006511.1"/>
</dbReference>
<dbReference type="SMR" id="Q5PFI5"/>
<dbReference type="KEGG" id="spt:SPA2564"/>
<dbReference type="HOGENOM" id="CLU_107159_0_0_6"/>
<dbReference type="Proteomes" id="UP000008185">
    <property type="component" value="Chromosome"/>
</dbReference>
<dbReference type="GO" id="GO:0005576">
    <property type="term" value="C:extracellular region"/>
    <property type="evidence" value="ECO:0007669"/>
    <property type="project" value="UniProtKB-SubCell"/>
</dbReference>
<dbReference type="GO" id="GO:0005096">
    <property type="term" value="F:GTPase activator activity"/>
    <property type="evidence" value="ECO:0007669"/>
    <property type="project" value="UniProtKB-KW"/>
</dbReference>
<dbReference type="GO" id="GO:0005085">
    <property type="term" value="F:guanyl-nucleotide exchange factor activity"/>
    <property type="evidence" value="ECO:0007669"/>
    <property type="project" value="UniProtKB-KW"/>
</dbReference>
<dbReference type="GO" id="GO:0030036">
    <property type="term" value="P:actin cytoskeleton organization"/>
    <property type="evidence" value="ECO:0007669"/>
    <property type="project" value="InterPro"/>
</dbReference>
<dbReference type="Gene3D" id="1.10.4120.10">
    <property type="entry name" value="SopE-like, GEF domain"/>
    <property type="match status" value="1"/>
</dbReference>
<dbReference type="InterPro" id="IPR005414">
    <property type="entry name" value="SopE"/>
</dbReference>
<dbReference type="InterPro" id="IPR035949">
    <property type="entry name" value="SopE-like_GEF_dom_sf"/>
</dbReference>
<dbReference type="InterPro" id="IPR016019">
    <property type="entry name" value="SopE_GEF_dom"/>
</dbReference>
<dbReference type="InterPro" id="IPR016018">
    <property type="entry name" value="SopE_N_dom"/>
</dbReference>
<dbReference type="NCBIfam" id="NF011809">
    <property type="entry name" value="PRK15279.1"/>
    <property type="match status" value="1"/>
</dbReference>
<dbReference type="NCBIfam" id="NF011810">
    <property type="entry name" value="PRK15280.1"/>
    <property type="match status" value="1"/>
</dbReference>
<dbReference type="Pfam" id="PF05364">
    <property type="entry name" value="SecIII_SopE_N"/>
    <property type="match status" value="1"/>
</dbReference>
<dbReference type="Pfam" id="PF07487">
    <property type="entry name" value="SopE_GEF"/>
    <property type="match status" value="1"/>
</dbReference>
<dbReference type="PIRSF" id="PIRSF034781">
    <property type="entry name" value="SecIII_sopE"/>
    <property type="match status" value="1"/>
</dbReference>
<dbReference type="PRINTS" id="PR01593">
    <property type="entry name" value="SOPEPROTEIN"/>
</dbReference>
<dbReference type="SUPFAM" id="SSF81832">
    <property type="entry name" value="SopE-like GEF domain"/>
    <property type="match status" value="1"/>
</dbReference>
<sequence length="240" mass="26713">MTKITLSPQNFRIQKQETTLLKEKSTEKNSLAKSILAVKNHFIELRSKLSERFISHKNTESSATHFHRGSASEGRAVLTNKVVKDFMLQTLNDIDIRGSASKDPAYASQTREAILSAVYSKNKDQCCNLLISKGINIAPFLQEIGEAAKNVGLPGTTKNDVFTPSGAGANPFITPLISSANSKYPRMFINQHQQASFKIYAEKIIMTEVAPLFNECAMPTPQQFQLILENIANKYIQYTP</sequence>